<dbReference type="EC" id="2.1.1.45" evidence="2"/>
<dbReference type="EMBL" id="AP010918">
    <property type="protein sequence ID" value="BAH27056.1"/>
    <property type="status" value="ALT_INIT"/>
    <property type="molecule type" value="Genomic_DNA"/>
</dbReference>
<dbReference type="RefSeq" id="WP_003911953.1">
    <property type="nucleotide sequence ID" value="NZ_CP014566.1"/>
</dbReference>
<dbReference type="SMR" id="C1AFM7"/>
<dbReference type="KEGG" id="mbt:JTY_2775"/>
<dbReference type="HOGENOM" id="CLU_021669_0_0_11"/>
<dbReference type="UniPathway" id="UPA00575"/>
<dbReference type="GO" id="GO:0005829">
    <property type="term" value="C:cytosol"/>
    <property type="evidence" value="ECO:0007669"/>
    <property type="project" value="TreeGrafter"/>
</dbReference>
<dbReference type="GO" id="GO:0004799">
    <property type="term" value="F:thymidylate synthase activity"/>
    <property type="evidence" value="ECO:0007669"/>
    <property type="project" value="UniProtKB-UniRule"/>
</dbReference>
<dbReference type="GO" id="GO:0006231">
    <property type="term" value="P:dTMP biosynthetic process"/>
    <property type="evidence" value="ECO:0007669"/>
    <property type="project" value="UniProtKB-UniRule"/>
</dbReference>
<dbReference type="GO" id="GO:0006235">
    <property type="term" value="P:dTTP biosynthetic process"/>
    <property type="evidence" value="ECO:0007669"/>
    <property type="project" value="UniProtKB-UniRule"/>
</dbReference>
<dbReference type="GO" id="GO:0032259">
    <property type="term" value="P:methylation"/>
    <property type="evidence" value="ECO:0007669"/>
    <property type="project" value="UniProtKB-KW"/>
</dbReference>
<dbReference type="CDD" id="cd00351">
    <property type="entry name" value="TS_Pyrimidine_HMase"/>
    <property type="match status" value="1"/>
</dbReference>
<dbReference type="FunFam" id="3.30.572.10:FF:000001">
    <property type="entry name" value="Thymidylate synthase"/>
    <property type="match status" value="1"/>
</dbReference>
<dbReference type="Gene3D" id="3.30.572.10">
    <property type="entry name" value="Thymidylate synthase/dCMP hydroxymethylase domain"/>
    <property type="match status" value="1"/>
</dbReference>
<dbReference type="HAMAP" id="MF_00008">
    <property type="entry name" value="Thymidy_synth_bact"/>
    <property type="match status" value="1"/>
</dbReference>
<dbReference type="InterPro" id="IPR045097">
    <property type="entry name" value="Thymidate_synth/dCMP_Mease"/>
</dbReference>
<dbReference type="InterPro" id="IPR023451">
    <property type="entry name" value="Thymidate_synth/dCMP_Mease_dom"/>
</dbReference>
<dbReference type="InterPro" id="IPR036926">
    <property type="entry name" value="Thymidate_synth/dCMP_Mease_sf"/>
</dbReference>
<dbReference type="InterPro" id="IPR000398">
    <property type="entry name" value="Thymidylate_synthase"/>
</dbReference>
<dbReference type="InterPro" id="IPR020940">
    <property type="entry name" value="Thymidylate_synthase_AS"/>
</dbReference>
<dbReference type="NCBIfam" id="NF002497">
    <property type="entry name" value="PRK01827.1-3"/>
    <property type="match status" value="1"/>
</dbReference>
<dbReference type="NCBIfam" id="NF002499">
    <property type="entry name" value="PRK01827.1-5"/>
    <property type="match status" value="1"/>
</dbReference>
<dbReference type="NCBIfam" id="TIGR03284">
    <property type="entry name" value="thym_sym"/>
    <property type="match status" value="2"/>
</dbReference>
<dbReference type="PANTHER" id="PTHR11548:SF9">
    <property type="entry name" value="THYMIDYLATE SYNTHASE"/>
    <property type="match status" value="1"/>
</dbReference>
<dbReference type="PANTHER" id="PTHR11548">
    <property type="entry name" value="THYMIDYLATE SYNTHASE 1"/>
    <property type="match status" value="1"/>
</dbReference>
<dbReference type="Pfam" id="PF00303">
    <property type="entry name" value="Thymidylat_synt"/>
    <property type="match status" value="1"/>
</dbReference>
<dbReference type="PRINTS" id="PR00108">
    <property type="entry name" value="THYMDSNTHASE"/>
</dbReference>
<dbReference type="SUPFAM" id="SSF55831">
    <property type="entry name" value="Thymidylate synthase/dCMP hydroxymethylase"/>
    <property type="match status" value="1"/>
</dbReference>
<dbReference type="PROSITE" id="PS00091">
    <property type="entry name" value="THYMIDYLATE_SYNTHASE"/>
    <property type="match status" value="1"/>
</dbReference>
<sequence length="266" mass="30152">MSIVTPYEDLLRFVLETGTPKSDRTGTGTRSLFGQQMRYDLSAGFPLLTTKKVHFKSVAYELLWFLRGDSNIGWLHEHGVTIWDEWASDTGELGPIYGVQWRSWPAPSGEHIDQISAALDLLRTDPDSRRIIVSAWNVGEIERMALPPCHAFFQFYVADGRLSCQLYQRSADLFLGVPFNIASYALLTHMMAAQAGLSVGEFIWTGGDCHIYDNHVEQVRLQLSREPRPYPKLLLADRDSIFEYTYEDIVVKNYDPHPAIKAPVAV</sequence>
<proteinExistence type="inferred from homology"/>
<comment type="function">
    <text evidence="2">Catalyzes the reductive methylation of 2'-deoxyuridine-5'-monophosphate (dUMP) to 2'-deoxythymidine-5'-monophosphate (dTMP) while utilizing 5,10-methylenetetrahydrofolate (mTHF) as the methyl donor and reductant in the reaction, yielding dihydrofolate (DHF) as a by-product. This enzymatic reaction provides an intracellular de novo source of dTMP, an essential precursor for DNA biosynthesis.</text>
</comment>
<comment type="catalytic activity">
    <reaction evidence="2">
        <text>dUMP + (6R)-5,10-methylene-5,6,7,8-tetrahydrofolate = 7,8-dihydrofolate + dTMP</text>
        <dbReference type="Rhea" id="RHEA:12104"/>
        <dbReference type="ChEBI" id="CHEBI:15636"/>
        <dbReference type="ChEBI" id="CHEBI:57451"/>
        <dbReference type="ChEBI" id="CHEBI:63528"/>
        <dbReference type="ChEBI" id="CHEBI:246422"/>
        <dbReference type="EC" id="2.1.1.45"/>
    </reaction>
</comment>
<comment type="pathway">
    <text evidence="2">Pyrimidine metabolism; dTTP biosynthesis.</text>
</comment>
<comment type="subunit">
    <text evidence="2">Homodimer.</text>
</comment>
<comment type="subcellular location">
    <subcellularLocation>
        <location evidence="2">Cytoplasm</location>
    </subcellularLocation>
</comment>
<comment type="similarity">
    <text evidence="2">Belongs to the thymidylate synthase family. Bacterial-type ThyA subfamily.</text>
</comment>
<comment type="sequence caution" evidence="1">
    <conflict type="erroneous initiation">
        <sequence resource="EMBL-CDS" id="BAH27056"/>
    </conflict>
    <text>Truncated N-terminus.</text>
</comment>
<accession>C1AFM7</accession>
<reference key="1">
    <citation type="journal article" date="2009" name="Vaccine">
        <title>Whole genome sequence analysis of Mycobacterium bovis bacillus Calmette-Guerin (BCG) Tokyo 172: a comparative study of BCG vaccine substrains.</title>
        <authorList>
            <person name="Seki M."/>
            <person name="Honda I."/>
            <person name="Fujita I."/>
            <person name="Yano I."/>
            <person name="Yamamoto S."/>
            <person name="Koyama A."/>
        </authorList>
    </citation>
    <scope>NUCLEOTIDE SEQUENCE [LARGE SCALE GENOMIC DNA]</scope>
    <source>
        <strain>BCG / Tokyo 172 / ATCC 35737 / TMC 1019</strain>
    </source>
</reference>
<name>TYSY_MYCBT</name>
<organism>
    <name type="scientific">Mycobacterium bovis (strain BCG / Tokyo 172 / ATCC 35737 / TMC 1019)</name>
    <dbReference type="NCBI Taxonomy" id="561275"/>
    <lineage>
        <taxon>Bacteria</taxon>
        <taxon>Bacillati</taxon>
        <taxon>Actinomycetota</taxon>
        <taxon>Actinomycetes</taxon>
        <taxon>Mycobacteriales</taxon>
        <taxon>Mycobacteriaceae</taxon>
        <taxon>Mycobacterium</taxon>
        <taxon>Mycobacterium tuberculosis complex</taxon>
    </lineage>
</organism>
<evidence type="ECO:0000250" key="1">
    <source>
        <dbReference type="UniProtKB" id="P9WFR9"/>
    </source>
</evidence>
<evidence type="ECO:0000255" key="2">
    <source>
        <dbReference type="HAMAP-Rule" id="MF_00008"/>
    </source>
</evidence>
<gene>
    <name evidence="2" type="primary">thyA</name>
    <name type="ordered locus">JTY_2775</name>
</gene>
<feature type="chain" id="PRO_1000197254" description="Thymidylate synthase">
    <location>
        <begin position="1"/>
        <end position="266"/>
    </location>
</feature>
<feature type="active site" description="Nucleophile" evidence="2">
    <location>
        <position position="149"/>
    </location>
</feature>
<feature type="binding site" description="in other chain" evidence="2">
    <location>
        <position position="24"/>
    </location>
    <ligand>
        <name>dUMP</name>
        <dbReference type="ChEBI" id="CHEBI:246422"/>
        <note>ligand shared between dimeric partners</note>
    </ligand>
</feature>
<feature type="binding site" evidence="2">
    <location>
        <position position="54"/>
    </location>
    <ligand>
        <name>(6R)-5,10-methylene-5,6,7,8-tetrahydrofolate</name>
        <dbReference type="ChEBI" id="CHEBI:15636"/>
    </ligand>
</feature>
<feature type="binding site" evidence="2">
    <location>
        <begin position="129"/>
        <end position="130"/>
    </location>
    <ligand>
        <name>dUMP</name>
        <dbReference type="ChEBI" id="CHEBI:246422"/>
        <note>ligand shared between dimeric partners</note>
    </ligand>
</feature>
<feature type="binding site" description="in other chain" evidence="2">
    <location>
        <begin position="169"/>
        <end position="172"/>
    </location>
    <ligand>
        <name>dUMP</name>
        <dbReference type="ChEBI" id="CHEBI:246422"/>
        <note>ligand shared between dimeric partners</note>
    </ligand>
</feature>
<feature type="binding site" evidence="2">
    <location>
        <position position="172"/>
    </location>
    <ligand>
        <name>(6R)-5,10-methylene-5,6,7,8-tetrahydrofolate</name>
        <dbReference type="ChEBI" id="CHEBI:15636"/>
    </ligand>
</feature>
<feature type="binding site" description="in other chain" evidence="2">
    <location>
        <position position="180"/>
    </location>
    <ligand>
        <name>dUMP</name>
        <dbReference type="ChEBI" id="CHEBI:246422"/>
        <note>ligand shared between dimeric partners</note>
    </ligand>
</feature>
<feature type="binding site" description="in other chain" evidence="2">
    <location>
        <begin position="210"/>
        <end position="212"/>
    </location>
    <ligand>
        <name>dUMP</name>
        <dbReference type="ChEBI" id="CHEBI:246422"/>
        <note>ligand shared between dimeric partners</note>
    </ligand>
</feature>
<feature type="binding site" evidence="2">
    <location>
        <position position="265"/>
    </location>
    <ligand>
        <name>(6R)-5,10-methylene-5,6,7,8-tetrahydrofolate</name>
        <dbReference type="ChEBI" id="CHEBI:15636"/>
    </ligand>
</feature>
<protein>
    <recommendedName>
        <fullName evidence="2">Thymidylate synthase</fullName>
        <shortName evidence="2">TS</shortName>
        <shortName evidence="2">TSase</shortName>
        <ecNumber evidence="2">2.1.1.45</ecNumber>
    </recommendedName>
</protein>
<keyword id="KW-0963">Cytoplasm</keyword>
<keyword id="KW-0489">Methyltransferase</keyword>
<keyword id="KW-0545">Nucleotide biosynthesis</keyword>
<keyword id="KW-0808">Transferase</keyword>